<evidence type="ECO:0000255" key="1">
    <source>
        <dbReference type="HAMAP-Rule" id="MF_02117"/>
    </source>
</evidence>
<comment type="function">
    <text evidence="1">Is required to sustain N(2)-dependent growth in the presence of low levels of carbon monoxide (CO). Probably acts by protecting the N(2) fixation ability of the nitrogenase complex, which is inactivated in the presence of CO.</text>
</comment>
<comment type="similarity">
    <text evidence="1">Belongs to the CowN family.</text>
</comment>
<keyword id="KW-0535">Nitrogen fixation</keyword>
<sequence length="92" mass="10851">MNDQTPDRYVTFLGLDCDAKADRLMDMLAVRIQEDDSRWVGYFRQKLAEKERMATDNLHFVGSQINSLYSYFEELEDADALDLLWHLEHNCC</sequence>
<dbReference type="EMBL" id="CP001151">
    <property type="protein sequence ID" value="ACM03710.1"/>
    <property type="molecule type" value="Genomic_DNA"/>
</dbReference>
<dbReference type="RefSeq" id="WP_009565892.1">
    <property type="nucleotide sequence ID" value="NC_011958.1"/>
</dbReference>
<dbReference type="GeneID" id="67449133"/>
<dbReference type="KEGG" id="rsk:RSKD131_3850"/>
<dbReference type="HOGENOM" id="CLU_149349_0_0_5"/>
<dbReference type="GO" id="GO:0009399">
    <property type="term" value="P:nitrogen fixation"/>
    <property type="evidence" value="ECO:0007669"/>
    <property type="project" value="UniProtKB-UniRule"/>
</dbReference>
<dbReference type="HAMAP" id="MF_02117">
    <property type="entry name" value="CowN"/>
    <property type="match status" value="1"/>
</dbReference>
<dbReference type="InterPro" id="IPR024899">
    <property type="entry name" value="CowN"/>
</dbReference>
<dbReference type="NCBIfam" id="NF033689">
    <property type="entry name" value="N2Fix_CO_CowN"/>
    <property type="match status" value="1"/>
</dbReference>
<dbReference type="Pfam" id="PF20543">
    <property type="entry name" value="CowN"/>
    <property type="match status" value="1"/>
</dbReference>
<name>COWN_CERSK</name>
<feature type="chain" id="PRO_0000407265" description="N(2)-fixation sustaining protein CowN">
    <location>
        <begin position="1"/>
        <end position="92"/>
    </location>
</feature>
<gene>
    <name evidence="1" type="primary">cowN</name>
    <name type="ordered locus">RSKD131_3850</name>
</gene>
<reference key="1">
    <citation type="journal article" date="2009" name="J. Bacteriol.">
        <title>Complete genome sequence of Rhodobacter sphaeroides KD131.</title>
        <authorList>
            <person name="Lim S.-K."/>
            <person name="Kim S.J."/>
            <person name="Cha S.H."/>
            <person name="Oh Y.-K."/>
            <person name="Rhee H.-J."/>
            <person name="Kim M.-S."/>
            <person name="Lee J.K."/>
        </authorList>
    </citation>
    <scope>NUCLEOTIDE SEQUENCE [LARGE SCALE GENOMIC DNA]</scope>
    <source>
        <strain>KD131 / KCTC 12085</strain>
    </source>
</reference>
<accession>B9KUI2</accession>
<proteinExistence type="inferred from homology"/>
<protein>
    <recommendedName>
        <fullName evidence="1">N(2)-fixation sustaining protein CowN</fullName>
    </recommendedName>
    <alternativeName>
        <fullName evidence="1">CO weal-nitrogenase</fullName>
    </alternativeName>
</protein>
<organism>
    <name type="scientific">Cereibacter sphaeroides (strain KD131 / KCTC 12085)</name>
    <name type="common">Rhodobacter sphaeroides</name>
    <dbReference type="NCBI Taxonomy" id="557760"/>
    <lineage>
        <taxon>Bacteria</taxon>
        <taxon>Pseudomonadati</taxon>
        <taxon>Pseudomonadota</taxon>
        <taxon>Alphaproteobacteria</taxon>
        <taxon>Rhodobacterales</taxon>
        <taxon>Paracoccaceae</taxon>
        <taxon>Cereibacter</taxon>
    </lineage>
</organism>